<accession>Q5ZK10</accession>
<feature type="chain" id="PRO_0000304739" description="NSFL1 cofactor p47">
    <location>
        <begin position="1"/>
        <end position="369"/>
    </location>
</feature>
<feature type="domain" description="SEP" evidence="4">
    <location>
        <begin position="178"/>
        <end position="243"/>
    </location>
</feature>
<feature type="domain" description="UBX" evidence="3">
    <location>
        <begin position="291"/>
        <end position="367"/>
    </location>
</feature>
<feature type="region of interest" description="Disordered" evidence="5">
    <location>
        <begin position="46"/>
        <end position="115"/>
    </location>
</feature>
<feature type="region of interest" description="Disordered" evidence="5">
    <location>
        <begin position="133"/>
        <end position="156"/>
    </location>
</feature>
<feature type="region of interest" description="Disordered" evidence="5">
    <location>
        <begin position="260"/>
        <end position="280"/>
    </location>
</feature>
<feature type="short sequence motif" description="Nuclear localization signal">
    <location>
        <begin position="109"/>
        <end position="115"/>
    </location>
</feature>
<feature type="short sequence motif" description="Nuclear localization signal">
    <location>
        <begin position="172"/>
        <end position="175"/>
    </location>
</feature>
<feature type="compositionally biased region" description="Basic and acidic residues" evidence="5">
    <location>
        <begin position="67"/>
        <end position="81"/>
    </location>
</feature>
<feature type="compositionally biased region" description="Polar residues" evidence="5">
    <location>
        <begin position="260"/>
        <end position="277"/>
    </location>
</feature>
<organism>
    <name type="scientific">Gallus gallus</name>
    <name type="common">Chicken</name>
    <dbReference type="NCBI Taxonomy" id="9031"/>
    <lineage>
        <taxon>Eukaryota</taxon>
        <taxon>Metazoa</taxon>
        <taxon>Chordata</taxon>
        <taxon>Craniata</taxon>
        <taxon>Vertebrata</taxon>
        <taxon>Euteleostomi</taxon>
        <taxon>Archelosauria</taxon>
        <taxon>Archosauria</taxon>
        <taxon>Dinosauria</taxon>
        <taxon>Saurischia</taxon>
        <taxon>Theropoda</taxon>
        <taxon>Coelurosauria</taxon>
        <taxon>Aves</taxon>
        <taxon>Neognathae</taxon>
        <taxon>Galloanserae</taxon>
        <taxon>Galliformes</taxon>
        <taxon>Phasianidae</taxon>
        <taxon>Phasianinae</taxon>
        <taxon>Gallus</taxon>
    </lineage>
</organism>
<comment type="function">
    <text evidence="1 2">Reduces the ATPase activity of VCP. Necessary for the fragmentation of Golgi stacks during mitosis and for VCP-mediated reassembly of Golgi stacks after mitosis. May play a role in VCP-mediated formation of transitional endoplasmic reticulum (tER). Inhibits the activity of CTSL (in vitro). Together with UBXN2B/p37, regulates the centrosomal levels of kinase AURKA/Aurora A levels during mitotic progression by promoting AURKA removal from centrosomes in prophase. Also, regulates spindle orientation during mitosis.</text>
</comment>
<comment type="subcellular location">
    <subcellularLocation>
        <location evidence="1">Nucleus</location>
    </subcellularLocation>
    <subcellularLocation>
        <location evidence="1">Golgi apparatus</location>
        <location evidence="1">Golgi stack</location>
    </subcellularLocation>
    <subcellularLocation>
        <location evidence="1">Cytoplasm</location>
        <location evidence="1">Cytoskeleton</location>
        <location evidence="1">Microtubule organizing center</location>
        <location evidence="1">Centrosome</location>
    </subcellularLocation>
    <text evidence="1">Predominantly nuclear in interphase cells. A small proportion of the protein is cytoplasmic, associated with Golgi stacks. Localizes to centrosome during mitotic prophase and metaphase.</text>
</comment>
<comment type="similarity">
    <text evidence="6">Belongs to the NSFL1C family.</text>
</comment>
<keyword id="KW-0963">Cytoplasm</keyword>
<keyword id="KW-0206">Cytoskeleton</keyword>
<keyword id="KW-0333">Golgi apparatus</keyword>
<keyword id="KW-0446">Lipid-binding</keyword>
<keyword id="KW-0539">Nucleus</keyword>
<keyword id="KW-1185">Reference proteome</keyword>
<protein>
    <recommendedName>
        <fullName>NSFL1 cofactor p47</fullName>
    </recommendedName>
    <alternativeName>
        <fullName>p97 cofactor p47</fullName>
    </alternativeName>
</protein>
<dbReference type="EMBL" id="AJ720274">
    <property type="protein sequence ID" value="CAG31933.1"/>
    <property type="molecule type" value="mRNA"/>
</dbReference>
<dbReference type="RefSeq" id="NP_001026030.1">
    <property type="nucleotide sequence ID" value="NM_001030859.2"/>
</dbReference>
<dbReference type="SMR" id="Q5ZK10"/>
<dbReference type="FunCoup" id="Q5ZK10">
    <property type="interactions" value="3080"/>
</dbReference>
<dbReference type="STRING" id="9031.ENSGALP00000009964"/>
<dbReference type="GlyGen" id="Q5ZK10">
    <property type="glycosylation" value="1 site"/>
</dbReference>
<dbReference type="PaxDb" id="9031-ENSGALP00000038618"/>
<dbReference type="Ensembl" id="ENSGALT00010032572.1">
    <property type="protein sequence ID" value="ENSGALP00010019296.1"/>
    <property type="gene ID" value="ENSGALG00010013539.1"/>
</dbReference>
<dbReference type="GeneID" id="419268"/>
<dbReference type="KEGG" id="gga:419268"/>
<dbReference type="CTD" id="55968"/>
<dbReference type="VEuPathDB" id="HostDB:geneid_419268"/>
<dbReference type="eggNOG" id="KOG2086">
    <property type="taxonomic scope" value="Eukaryota"/>
</dbReference>
<dbReference type="GeneTree" id="ENSGT00520000055567"/>
<dbReference type="HOGENOM" id="CLU_029402_0_0_1"/>
<dbReference type="InParanoid" id="Q5ZK10"/>
<dbReference type="OrthoDB" id="25887at2759"/>
<dbReference type="PhylomeDB" id="Q5ZK10"/>
<dbReference type="Reactome" id="R-GGA-9013407">
    <property type="pathway name" value="RHOH GTPase cycle"/>
</dbReference>
<dbReference type="PRO" id="PR:Q5ZK10"/>
<dbReference type="Proteomes" id="UP000000539">
    <property type="component" value="Chromosome 20"/>
</dbReference>
<dbReference type="Bgee" id="ENSGALG00000006182">
    <property type="expression patterns" value="Expressed in testis and 14 other cell types or tissues"/>
</dbReference>
<dbReference type="GO" id="GO:0005813">
    <property type="term" value="C:centrosome"/>
    <property type="evidence" value="ECO:0007669"/>
    <property type="project" value="UniProtKB-SubCell"/>
</dbReference>
<dbReference type="GO" id="GO:0005829">
    <property type="term" value="C:cytosol"/>
    <property type="evidence" value="ECO:0000318"/>
    <property type="project" value="GO_Central"/>
</dbReference>
<dbReference type="GO" id="GO:0005795">
    <property type="term" value="C:Golgi stack"/>
    <property type="evidence" value="ECO:0007669"/>
    <property type="project" value="UniProtKB-SubCell"/>
</dbReference>
<dbReference type="GO" id="GO:0005634">
    <property type="term" value="C:nucleus"/>
    <property type="evidence" value="ECO:0000318"/>
    <property type="project" value="GO_Central"/>
</dbReference>
<dbReference type="GO" id="GO:1990730">
    <property type="term" value="C:VCP-NSFL1C complex"/>
    <property type="evidence" value="ECO:0007669"/>
    <property type="project" value="Ensembl"/>
</dbReference>
<dbReference type="GO" id="GO:0008289">
    <property type="term" value="F:lipid binding"/>
    <property type="evidence" value="ECO:0007669"/>
    <property type="project" value="UniProtKB-KW"/>
</dbReference>
<dbReference type="GO" id="GO:0043130">
    <property type="term" value="F:ubiquitin binding"/>
    <property type="evidence" value="ECO:0000318"/>
    <property type="project" value="GO_Central"/>
</dbReference>
<dbReference type="GO" id="GO:0000045">
    <property type="term" value="P:autophagosome assembly"/>
    <property type="evidence" value="ECO:0000318"/>
    <property type="project" value="GO_Central"/>
</dbReference>
<dbReference type="GO" id="GO:0000132">
    <property type="term" value="P:establishment of mitotic spindle orientation"/>
    <property type="evidence" value="ECO:0007669"/>
    <property type="project" value="Ensembl"/>
</dbReference>
<dbReference type="GO" id="GO:0007030">
    <property type="term" value="P:Golgi organization"/>
    <property type="evidence" value="ECO:0000250"/>
    <property type="project" value="AgBase"/>
</dbReference>
<dbReference type="GO" id="GO:0061025">
    <property type="term" value="P:membrane fusion"/>
    <property type="evidence" value="ECO:0000250"/>
    <property type="project" value="AgBase"/>
</dbReference>
<dbReference type="GO" id="GO:1904780">
    <property type="term" value="P:negative regulation of protein localization to centrosome"/>
    <property type="evidence" value="ECO:0007669"/>
    <property type="project" value="Ensembl"/>
</dbReference>
<dbReference type="GO" id="GO:0031468">
    <property type="term" value="P:nuclear membrane reassembly"/>
    <property type="evidence" value="ECO:0000318"/>
    <property type="project" value="GO_Central"/>
</dbReference>
<dbReference type="GO" id="GO:0046604">
    <property type="term" value="P:positive regulation of mitotic centrosome separation"/>
    <property type="evidence" value="ECO:0007669"/>
    <property type="project" value="Ensembl"/>
</dbReference>
<dbReference type="GO" id="GO:0043161">
    <property type="term" value="P:proteasome-mediated ubiquitin-dependent protein catabolic process"/>
    <property type="evidence" value="ECO:0000318"/>
    <property type="project" value="GO_Central"/>
</dbReference>
<dbReference type="CDD" id="cd14348">
    <property type="entry name" value="UBA_p47"/>
    <property type="match status" value="1"/>
</dbReference>
<dbReference type="CDD" id="cd17162">
    <property type="entry name" value="UBX_UBXN2C"/>
    <property type="match status" value="1"/>
</dbReference>
<dbReference type="FunFam" id="3.10.20.90:FF:000093">
    <property type="entry name" value="NSFL1 (P97) cofactor (P47)"/>
    <property type="match status" value="1"/>
</dbReference>
<dbReference type="FunFam" id="3.30.420.210:FF:000001">
    <property type="entry name" value="NSFL1 (P97) cofactor (P47)"/>
    <property type="match status" value="1"/>
</dbReference>
<dbReference type="FunFam" id="1.10.8.10:FF:000020">
    <property type="entry name" value="NSFL1 (p97) cofactor (p47)"/>
    <property type="match status" value="1"/>
</dbReference>
<dbReference type="Gene3D" id="1.10.8.10">
    <property type="entry name" value="DNA helicase RuvA subunit, C-terminal domain"/>
    <property type="match status" value="1"/>
</dbReference>
<dbReference type="Gene3D" id="3.10.20.90">
    <property type="entry name" value="Phosphatidylinositol 3-kinase Catalytic Subunit, Chain A, domain 1"/>
    <property type="match status" value="1"/>
</dbReference>
<dbReference type="Gene3D" id="3.30.420.210">
    <property type="entry name" value="SEP domain"/>
    <property type="match status" value="1"/>
</dbReference>
<dbReference type="InterPro" id="IPR036241">
    <property type="entry name" value="NSFL1C_SEP_dom_sf"/>
</dbReference>
<dbReference type="InterPro" id="IPR012989">
    <property type="entry name" value="SEP_domain"/>
</dbReference>
<dbReference type="InterPro" id="IPR009060">
    <property type="entry name" value="UBA-like_sf"/>
</dbReference>
<dbReference type="InterPro" id="IPR029071">
    <property type="entry name" value="Ubiquitin-like_domsf"/>
</dbReference>
<dbReference type="InterPro" id="IPR001012">
    <property type="entry name" value="UBX_dom"/>
</dbReference>
<dbReference type="PANTHER" id="PTHR23333:SF24">
    <property type="entry name" value="NSFL1 COFACTOR P47"/>
    <property type="match status" value="1"/>
</dbReference>
<dbReference type="PANTHER" id="PTHR23333">
    <property type="entry name" value="UBX DOMAIN CONTAINING PROTEIN"/>
    <property type="match status" value="1"/>
</dbReference>
<dbReference type="Pfam" id="PF08059">
    <property type="entry name" value="SEP"/>
    <property type="match status" value="1"/>
</dbReference>
<dbReference type="Pfam" id="PF14555">
    <property type="entry name" value="UBA_4"/>
    <property type="match status" value="1"/>
</dbReference>
<dbReference type="Pfam" id="PF00789">
    <property type="entry name" value="UBX"/>
    <property type="match status" value="1"/>
</dbReference>
<dbReference type="SMART" id="SM00553">
    <property type="entry name" value="SEP"/>
    <property type="match status" value="1"/>
</dbReference>
<dbReference type="SMART" id="SM00166">
    <property type="entry name" value="UBX"/>
    <property type="match status" value="1"/>
</dbReference>
<dbReference type="SUPFAM" id="SSF102848">
    <property type="entry name" value="NSFL1 (p97 ATPase) cofactor p47, SEP domain"/>
    <property type="match status" value="1"/>
</dbReference>
<dbReference type="SUPFAM" id="SSF46934">
    <property type="entry name" value="UBA-like"/>
    <property type="match status" value="1"/>
</dbReference>
<dbReference type="SUPFAM" id="SSF54236">
    <property type="entry name" value="Ubiquitin-like"/>
    <property type="match status" value="1"/>
</dbReference>
<dbReference type="PROSITE" id="PS51399">
    <property type="entry name" value="SEP"/>
    <property type="match status" value="1"/>
</dbReference>
<dbReference type="PROSITE" id="PS50033">
    <property type="entry name" value="UBX"/>
    <property type="match status" value="1"/>
</dbReference>
<reference key="1">
    <citation type="journal article" date="2005" name="Genome Biol.">
        <title>Full-length cDNAs from chicken bursal lymphocytes to facilitate gene function analysis.</title>
        <authorList>
            <person name="Caldwell R.B."/>
            <person name="Kierzek A.M."/>
            <person name="Arakawa H."/>
            <person name="Bezzubov Y."/>
            <person name="Zaim J."/>
            <person name="Fiedler P."/>
            <person name="Kutter S."/>
            <person name="Blagodatski A."/>
            <person name="Kostovska D."/>
            <person name="Koter M."/>
            <person name="Plachy J."/>
            <person name="Carninci P."/>
            <person name="Hayashizaki Y."/>
            <person name="Buerstedde J.-M."/>
        </authorList>
    </citation>
    <scope>NUCLEOTIDE SEQUENCE [LARGE SCALE MRNA]</scope>
    <source>
        <strain>CB</strain>
        <tissue>Bursa of Fabricius</tissue>
    </source>
</reference>
<name>NSF1C_CHICK</name>
<gene>
    <name type="primary">NSFL1C</name>
    <name type="ORF">RCJMB04_13o20</name>
</gene>
<evidence type="ECO:0000250" key="1">
    <source>
        <dbReference type="UniProtKB" id="O35987"/>
    </source>
</evidence>
<evidence type="ECO:0000250" key="2">
    <source>
        <dbReference type="UniProtKB" id="Q9UNZ2"/>
    </source>
</evidence>
<evidence type="ECO:0000255" key="3">
    <source>
        <dbReference type="PROSITE-ProRule" id="PRU00215"/>
    </source>
</evidence>
<evidence type="ECO:0000255" key="4">
    <source>
        <dbReference type="PROSITE-ProRule" id="PRU00732"/>
    </source>
</evidence>
<evidence type="ECO:0000256" key="5">
    <source>
        <dbReference type="SAM" id="MobiDB-lite"/>
    </source>
</evidence>
<evidence type="ECO:0000305" key="6"/>
<proteinExistence type="evidence at transcript level"/>
<sequence length="369" mass="40641">MADREEALREFVAVTGAEEERARFFLESAGWDLQIALASFYEDGGDEDILTLPQPTPSSVSRGTAASDHRVTSFRDLVHAQEDDDEEEEGQRFYAGGSERSGQQIVGPPRKKSPNELVEDLFKGAKEHGAVAVDRTAKSSGESSKPKPFAGGGYRLGATPEEESAYVAGERRHNSVQDVHVVLKLWKTGFSLDSGELRSYQDPSNAQFLDDIRRGEVPAELRRLARGGQVNLDMEDHRDEEYVKPKSVFKAFTGEGQKLGSTAPQVLSTSSPAQQAENEAKASSAIAIDESEPVTNIQIRLADGGRLVQKFNHNHRIRDIRLFIVDARPAMAATSFVLMTTFPNKELTDENQTLKEANLLNAVIVQRLT</sequence>